<protein>
    <recommendedName>
        <fullName evidence="1">Large ribosomal subunit protein bL36</fullName>
    </recommendedName>
    <alternativeName>
        <fullName evidence="2">50S ribosomal protein L36</fullName>
    </alternativeName>
</protein>
<accession>Q1IFU5</accession>
<gene>
    <name evidence="1" type="primary">rpmJ</name>
    <name type="ordered locus">PSEEN0510.1</name>
</gene>
<sequence>MKVRASVKKLCRNCKIIRREGIVRVICSAEPRHKQRQG</sequence>
<feature type="chain" id="PRO_0000302271" description="Large ribosomal subunit protein bL36">
    <location>
        <begin position="1"/>
        <end position="38"/>
    </location>
</feature>
<comment type="similarity">
    <text evidence="1">Belongs to the bacterial ribosomal protein bL36 family.</text>
</comment>
<reference key="1">
    <citation type="journal article" date="2006" name="Nat. Biotechnol.">
        <title>Complete genome sequence of the entomopathogenic and metabolically versatile soil bacterium Pseudomonas entomophila.</title>
        <authorList>
            <person name="Vodovar N."/>
            <person name="Vallenet D."/>
            <person name="Cruveiller S."/>
            <person name="Rouy Z."/>
            <person name="Barbe V."/>
            <person name="Acosta C."/>
            <person name="Cattolico L."/>
            <person name="Jubin C."/>
            <person name="Lajus A."/>
            <person name="Segurens B."/>
            <person name="Vacherie B."/>
            <person name="Wincker P."/>
            <person name="Weissenbach J."/>
            <person name="Lemaitre B."/>
            <person name="Medigue C."/>
            <person name="Boccard F."/>
        </authorList>
    </citation>
    <scope>NUCLEOTIDE SEQUENCE [LARGE SCALE GENOMIC DNA]</scope>
    <source>
        <strain>L48</strain>
    </source>
</reference>
<name>RL36_PSEE4</name>
<organism>
    <name type="scientific">Pseudomonas entomophila (strain L48)</name>
    <dbReference type="NCBI Taxonomy" id="384676"/>
    <lineage>
        <taxon>Bacteria</taxon>
        <taxon>Pseudomonadati</taxon>
        <taxon>Pseudomonadota</taxon>
        <taxon>Gammaproteobacteria</taxon>
        <taxon>Pseudomonadales</taxon>
        <taxon>Pseudomonadaceae</taxon>
        <taxon>Pseudomonas</taxon>
    </lineage>
</organism>
<keyword id="KW-0687">Ribonucleoprotein</keyword>
<keyword id="KW-0689">Ribosomal protein</keyword>
<proteinExistence type="inferred from homology"/>
<dbReference type="EMBL" id="CT573326">
    <property type="protein sequence ID" value="CAK13457.1"/>
    <property type="molecule type" value="Genomic_DNA"/>
</dbReference>
<dbReference type="RefSeq" id="WP_011531897.1">
    <property type="nucleotide sequence ID" value="NC_008027.1"/>
</dbReference>
<dbReference type="SMR" id="Q1IFU5"/>
<dbReference type="STRING" id="384676.PSEENCDS526601D"/>
<dbReference type="GeneID" id="93546171"/>
<dbReference type="KEGG" id="pen:PSEENCDS526601D"/>
<dbReference type="eggNOG" id="COG0257">
    <property type="taxonomic scope" value="Bacteria"/>
</dbReference>
<dbReference type="HOGENOM" id="CLU_135723_6_2_6"/>
<dbReference type="OrthoDB" id="9802520at2"/>
<dbReference type="Proteomes" id="UP000000658">
    <property type="component" value="Chromosome"/>
</dbReference>
<dbReference type="GO" id="GO:0005737">
    <property type="term" value="C:cytoplasm"/>
    <property type="evidence" value="ECO:0007669"/>
    <property type="project" value="UniProtKB-ARBA"/>
</dbReference>
<dbReference type="GO" id="GO:1990904">
    <property type="term" value="C:ribonucleoprotein complex"/>
    <property type="evidence" value="ECO:0007669"/>
    <property type="project" value="UniProtKB-KW"/>
</dbReference>
<dbReference type="GO" id="GO:0005840">
    <property type="term" value="C:ribosome"/>
    <property type="evidence" value="ECO:0007669"/>
    <property type="project" value="UniProtKB-KW"/>
</dbReference>
<dbReference type="GO" id="GO:0003735">
    <property type="term" value="F:structural constituent of ribosome"/>
    <property type="evidence" value="ECO:0007669"/>
    <property type="project" value="InterPro"/>
</dbReference>
<dbReference type="GO" id="GO:0006412">
    <property type="term" value="P:translation"/>
    <property type="evidence" value="ECO:0007669"/>
    <property type="project" value="UniProtKB-UniRule"/>
</dbReference>
<dbReference type="HAMAP" id="MF_00251">
    <property type="entry name" value="Ribosomal_bL36"/>
    <property type="match status" value="1"/>
</dbReference>
<dbReference type="InterPro" id="IPR000473">
    <property type="entry name" value="Ribosomal_bL36"/>
</dbReference>
<dbReference type="InterPro" id="IPR035977">
    <property type="entry name" value="Ribosomal_bL36_sp"/>
</dbReference>
<dbReference type="NCBIfam" id="TIGR01022">
    <property type="entry name" value="rpmJ_bact"/>
    <property type="match status" value="1"/>
</dbReference>
<dbReference type="PANTHER" id="PTHR42888">
    <property type="entry name" value="50S RIBOSOMAL PROTEIN L36, CHLOROPLASTIC"/>
    <property type="match status" value="1"/>
</dbReference>
<dbReference type="PANTHER" id="PTHR42888:SF1">
    <property type="entry name" value="LARGE RIBOSOMAL SUBUNIT PROTEIN BL36C"/>
    <property type="match status" value="1"/>
</dbReference>
<dbReference type="Pfam" id="PF00444">
    <property type="entry name" value="Ribosomal_L36"/>
    <property type="match status" value="1"/>
</dbReference>
<dbReference type="SUPFAM" id="SSF57840">
    <property type="entry name" value="Ribosomal protein L36"/>
    <property type="match status" value="1"/>
</dbReference>
<dbReference type="PROSITE" id="PS00828">
    <property type="entry name" value="RIBOSOMAL_L36"/>
    <property type="match status" value="1"/>
</dbReference>
<evidence type="ECO:0000255" key="1">
    <source>
        <dbReference type="HAMAP-Rule" id="MF_00251"/>
    </source>
</evidence>
<evidence type="ECO:0000305" key="2"/>